<organism>
    <name type="scientific">Dictyostelium discoideum</name>
    <name type="common">Social amoeba</name>
    <dbReference type="NCBI Taxonomy" id="44689"/>
    <lineage>
        <taxon>Eukaryota</taxon>
        <taxon>Amoebozoa</taxon>
        <taxon>Evosea</taxon>
        <taxon>Eumycetozoa</taxon>
        <taxon>Dictyostelia</taxon>
        <taxon>Dictyosteliales</taxon>
        <taxon>Dictyosteliaceae</taxon>
        <taxon>Dictyostelium</taxon>
    </lineage>
</organism>
<dbReference type="EC" id="3.6.4.-" evidence="2"/>
<dbReference type="EMBL" id="AAFI02000141">
    <property type="protein sequence ID" value="EAL62684.1"/>
    <property type="molecule type" value="Genomic_DNA"/>
</dbReference>
<dbReference type="RefSeq" id="XP_636187.1">
    <property type="nucleotide sequence ID" value="XM_631095.1"/>
</dbReference>
<dbReference type="SMR" id="Q54HF1"/>
<dbReference type="FunCoup" id="Q54HF1">
    <property type="interactions" value="8"/>
</dbReference>
<dbReference type="STRING" id="44689.Q54HF1"/>
<dbReference type="PaxDb" id="44689-DDB0220462"/>
<dbReference type="EnsemblProtists" id="EAL62684">
    <property type="protein sequence ID" value="EAL62684"/>
    <property type="gene ID" value="DDB_G0289505"/>
</dbReference>
<dbReference type="GeneID" id="8627174"/>
<dbReference type="KEGG" id="ddi:DDB_G0289505"/>
<dbReference type="dictyBase" id="DDB_G0289505">
    <property type="gene designation" value="act24"/>
</dbReference>
<dbReference type="VEuPathDB" id="AmoebaDB:DDB_G0289505"/>
<dbReference type="eggNOG" id="KOG0676">
    <property type="taxonomic scope" value="Eukaryota"/>
</dbReference>
<dbReference type="HOGENOM" id="CLU_027965_0_2_1"/>
<dbReference type="InParanoid" id="Q54HF1"/>
<dbReference type="OMA" id="MECKEDL"/>
<dbReference type="PhylomeDB" id="Q54HF1"/>
<dbReference type="PRO" id="PR:Q54HF1"/>
<dbReference type="Proteomes" id="UP000002195">
    <property type="component" value="Chromosome 5"/>
</dbReference>
<dbReference type="GO" id="GO:0015629">
    <property type="term" value="C:actin cytoskeleton"/>
    <property type="evidence" value="ECO:0000250"/>
    <property type="project" value="dictyBase"/>
</dbReference>
<dbReference type="GO" id="GO:0005737">
    <property type="term" value="C:cytoplasm"/>
    <property type="evidence" value="ECO:0007669"/>
    <property type="project" value="UniProtKB-KW"/>
</dbReference>
<dbReference type="GO" id="GO:0005524">
    <property type="term" value="F:ATP binding"/>
    <property type="evidence" value="ECO:0007669"/>
    <property type="project" value="UniProtKB-KW"/>
</dbReference>
<dbReference type="GO" id="GO:0016787">
    <property type="term" value="F:hydrolase activity"/>
    <property type="evidence" value="ECO:0007669"/>
    <property type="project" value="UniProtKB-KW"/>
</dbReference>
<dbReference type="GO" id="GO:0017022">
    <property type="term" value="F:myosin binding"/>
    <property type="evidence" value="ECO:0000250"/>
    <property type="project" value="dictyBase"/>
</dbReference>
<dbReference type="GO" id="GO:0005200">
    <property type="term" value="F:structural constituent of cytoskeleton"/>
    <property type="evidence" value="ECO:0000250"/>
    <property type="project" value="dictyBase"/>
</dbReference>
<dbReference type="GO" id="GO:0006909">
    <property type="term" value="P:phagocytosis"/>
    <property type="evidence" value="ECO:0000250"/>
    <property type="project" value="dictyBase"/>
</dbReference>
<dbReference type="FunFam" id="2.30.36.70:FF:000001">
    <property type="entry name" value="Actin, alpha skeletal muscle"/>
    <property type="match status" value="1"/>
</dbReference>
<dbReference type="FunFam" id="3.30.420.40:FF:000291">
    <property type="entry name" value="Actin, alpha skeletal muscle"/>
    <property type="match status" value="1"/>
</dbReference>
<dbReference type="FunFam" id="3.90.640.10:FF:000047">
    <property type="entry name" value="Actin, alpha skeletal muscle"/>
    <property type="match status" value="1"/>
</dbReference>
<dbReference type="FunFam" id="3.30.420.40:FF:000404">
    <property type="entry name" value="Major actin"/>
    <property type="match status" value="1"/>
</dbReference>
<dbReference type="FunFam" id="3.30.420.40:FF:000058">
    <property type="entry name" value="Putative actin-related protein 5"/>
    <property type="match status" value="1"/>
</dbReference>
<dbReference type="Gene3D" id="3.30.420.40">
    <property type="match status" value="2"/>
</dbReference>
<dbReference type="Gene3D" id="3.90.640.10">
    <property type="entry name" value="Actin, Chain A, domain 4"/>
    <property type="match status" value="1"/>
</dbReference>
<dbReference type="InterPro" id="IPR004000">
    <property type="entry name" value="Actin"/>
</dbReference>
<dbReference type="InterPro" id="IPR020902">
    <property type="entry name" value="Actin/actin-like_CS"/>
</dbReference>
<dbReference type="InterPro" id="IPR004001">
    <property type="entry name" value="Actin_CS"/>
</dbReference>
<dbReference type="InterPro" id="IPR043129">
    <property type="entry name" value="ATPase_NBD"/>
</dbReference>
<dbReference type="PANTHER" id="PTHR11937">
    <property type="entry name" value="ACTIN"/>
    <property type="match status" value="1"/>
</dbReference>
<dbReference type="Pfam" id="PF00022">
    <property type="entry name" value="Actin"/>
    <property type="match status" value="1"/>
</dbReference>
<dbReference type="PRINTS" id="PR00190">
    <property type="entry name" value="ACTIN"/>
</dbReference>
<dbReference type="SMART" id="SM00268">
    <property type="entry name" value="ACTIN"/>
    <property type="match status" value="1"/>
</dbReference>
<dbReference type="SUPFAM" id="SSF53067">
    <property type="entry name" value="Actin-like ATPase domain"/>
    <property type="match status" value="2"/>
</dbReference>
<dbReference type="PROSITE" id="PS00406">
    <property type="entry name" value="ACTINS_1"/>
    <property type="match status" value="1"/>
</dbReference>
<dbReference type="PROSITE" id="PS00432">
    <property type="entry name" value="ACTINS_2"/>
    <property type="match status" value="1"/>
</dbReference>
<dbReference type="PROSITE" id="PS01132">
    <property type="entry name" value="ACTINS_ACT_LIKE"/>
    <property type="match status" value="1"/>
</dbReference>
<name>ACT24_DICDI</name>
<feature type="chain" id="PRO_0000312674" description="Putative actin-24">
    <location>
        <begin position="1"/>
        <end position="377"/>
    </location>
</feature>
<sequence>MECKEDLTIVIDNGSGMCKAGFAGYDAPHAVFPSIVGRPRHTGVMVGMGQKDSYIGDEAQSKRDILNLKFPVERGIITNWNDMEEIWHHTFYNELRVAPEEHPVLLTEPPLNSKANREKMPQIMFETFNTPAMYVAIQAVLSLYASGRATGVILDSGDGVSYTVPVYEGNTFPLSITRLHLAGGDLTDYMSRLLYTDCGYYFSTKAEKEIVKDIKEKLAYVALDFEAEMQTAASSPSLEKSYKLPDGRMITIGNERFRCPEALFQPSLLAMDYDGIHETTYNSIMKCDVDFHKDLYGNVLLSGGSTMFPGIADRMNKELTALAPSTMKIKIIAPPERKYSAWIGGSILASLSSFQPRWISKEEYDESGPSIVHRKCW</sequence>
<proteinExistence type="inferred from homology"/>
<comment type="function">
    <text evidence="1">Actins are highly conserved proteins that are involved in various types of cell motility and are ubiquitously expressed in all eukaryotic cells. Multiple isoforms are involved in various cellular functions such as cytoskeleton structure, cell mobility, chromosome movement and muscle contraction (By similarity).</text>
</comment>
<comment type="catalytic activity">
    <reaction evidence="2">
        <text>ATP + H2O = ADP + phosphate + H(+)</text>
        <dbReference type="Rhea" id="RHEA:13065"/>
        <dbReference type="ChEBI" id="CHEBI:15377"/>
        <dbReference type="ChEBI" id="CHEBI:15378"/>
        <dbReference type="ChEBI" id="CHEBI:30616"/>
        <dbReference type="ChEBI" id="CHEBI:43474"/>
        <dbReference type="ChEBI" id="CHEBI:456216"/>
    </reaction>
</comment>
<comment type="subcellular location">
    <subcellularLocation>
        <location evidence="1">Cytoplasm</location>
        <location evidence="1">Cytoskeleton</location>
    </subcellularLocation>
</comment>
<comment type="similarity">
    <text evidence="3">Belongs to the actin family.</text>
</comment>
<protein>
    <recommendedName>
        <fullName>Putative actin-24</fullName>
        <ecNumber evidence="2">3.6.4.-</ecNumber>
    </recommendedName>
</protein>
<gene>
    <name type="primary">act24</name>
    <name type="ORF">DDB_G0289505</name>
</gene>
<evidence type="ECO:0000250" key="1"/>
<evidence type="ECO:0000250" key="2">
    <source>
        <dbReference type="UniProtKB" id="P68137"/>
    </source>
</evidence>
<evidence type="ECO:0000305" key="3"/>
<reference key="1">
    <citation type="journal article" date="2005" name="Nature">
        <title>The genome of the social amoeba Dictyostelium discoideum.</title>
        <authorList>
            <person name="Eichinger L."/>
            <person name="Pachebat J.A."/>
            <person name="Gloeckner G."/>
            <person name="Rajandream M.A."/>
            <person name="Sucgang R."/>
            <person name="Berriman M."/>
            <person name="Song J."/>
            <person name="Olsen R."/>
            <person name="Szafranski K."/>
            <person name="Xu Q."/>
            <person name="Tunggal B."/>
            <person name="Kummerfeld S."/>
            <person name="Madera M."/>
            <person name="Konfortov B.A."/>
            <person name="Rivero F."/>
            <person name="Bankier A.T."/>
            <person name="Lehmann R."/>
            <person name="Hamlin N."/>
            <person name="Davies R."/>
            <person name="Gaudet P."/>
            <person name="Fey P."/>
            <person name="Pilcher K."/>
            <person name="Chen G."/>
            <person name="Saunders D."/>
            <person name="Sodergren E.J."/>
            <person name="Davis P."/>
            <person name="Kerhornou A."/>
            <person name="Nie X."/>
            <person name="Hall N."/>
            <person name="Anjard C."/>
            <person name="Hemphill L."/>
            <person name="Bason N."/>
            <person name="Farbrother P."/>
            <person name="Desany B."/>
            <person name="Just E."/>
            <person name="Morio T."/>
            <person name="Rost R."/>
            <person name="Churcher C.M."/>
            <person name="Cooper J."/>
            <person name="Haydock S."/>
            <person name="van Driessche N."/>
            <person name="Cronin A."/>
            <person name="Goodhead I."/>
            <person name="Muzny D.M."/>
            <person name="Mourier T."/>
            <person name="Pain A."/>
            <person name="Lu M."/>
            <person name="Harper D."/>
            <person name="Lindsay R."/>
            <person name="Hauser H."/>
            <person name="James K.D."/>
            <person name="Quiles M."/>
            <person name="Madan Babu M."/>
            <person name="Saito T."/>
            <person name="Buchrieser C."/>
            <person name="Wardroper A."/>
            <person name="Felder M."/>
            <person name="Thangavelu M."/>
            <person name="Johnson D."/>
            <person name="Knights A."/>
            <person name="Loulseged H."/>
            <person name="Mungall K.L."/>
            <person name="Oliver K."/>
            <person name="Price C."/>
            <person name="Quail M.A."/>
            <person name="Urushihara H."/>
            <person name="Hernandez J."/>
            <person name="Rabbinowitsch E."/>
            <person name="Steffen D."/>
            <person name="Sanders M."/>
            <person name="Ma J."/>
            <person name="Kohara Y."/>
            <person name="Sharp S."/>
            <person name="Simmonds M.N."/>
            <person name="Spiegler S."/>
            <person name="Tivey A."/>
            <person name="Sugano S."/>
            <person name="White B."/>
            <person name="Walker D."/>
            <person name="Woodward J.R."/>
            <person name="Winckler T."/>
            <person name="Tanaka Y."/>
            <person name="Shaulsky G."/>
            <person name="Schleicher M."/>
            <person name="Weinstock G.M."/>
            <person name="Rosenthal A."/>
            <person name="Cox E.C."/>
            <person name="Chisholm R.L."/>
            <person name="Gibbs R.A."/>
            <person name="Loomis W.F."/>
            <person name="Platzer M."/>
            <person name="Kay R.R."/>
            <person name="Williams J.G."/>
            <person name="Dear P.H."/>
            <person name="Noegel A.A."/>
            <person name="Barrell B.G."/>
            <person name="Kuspa A."/>
        </authorList>
    </citation>
    <scope>NUCLEOTIDE SEQUENCE [LARGE SCALE GENOMIC DNA]</scope>
    <source>
        <strain>AX4</strain>
    </source>
</reference>
<accession>Q54HF1</accession>
<keyword id="KW-0067">ATP-binding</keyword>
<keyword id="KW-0963">Cytoplasm</keyword>
<keyword id="KW-0206">Cytoskeleton</keyword>
<keyword id="KW-0378">Hydrolase</keyword>
<keyword id="KW-0547">Nucleotide-binding</keyword>
<keyword id="KW-1185">Reference proteome</keyword>